<keyword id="KW-0903">Direct protein sequencing</keyword>
<keyword id="KW-1185">Reference proteome</keyword>
<keyword id="KW-0687">Ribonucleoprotein</keyword>
<keyword id="KW-0689">Ribosomal protein</keyword>
<organism>
    <name type="scientific">Methanothermobacter thermautotrophicus (strain ATCC 29096 / DSM 1053 / JCM 10044 / NBRC 100330 / Delta H)</name>
    <name type="common">Methanobacterium thermoautotrophicum</name>
    <dbReference type="NCBI Taxonomy" id="187420"/>
    <lineage>
        <taxon>Archaea</taxon>
        <taxon>Methanobacteriati</taxon>
        <taxon>Methanobacteriota</taxon>
        <taxon>Methanomada group</taxon>
        <taxon>Methanobacteria</taxon>
        <taxon>Methanobacteriales</taxon>
        <taxon>Methanobacteriaceae</taxon>
        <taxon>Methanothermobacter</taxon>
    </lineage>
</organism>
<comment type="function">
    <text evidence="1">Forms part of the ribosomal stalk, playing a central role in the interaction of the ribosome with GTP-bound translation factors.</text>
</comment>
<comment type="subunit">
    <text evidence="1">Part of the 50S ribosomal subunit. Homodimer, it forms part of the ribosomal stalk which helps the ribosome interact with GTP-bound translation factors. Forms a heptameric uL10/P0(P1)2(P1)2(P1)2 complex, where uL10/P0 forms an elongated spine to which the P1 dimers bind in a sequential fashion.</text>
</comment>
<comment type="similarity">
    <text evidence="1">Belongs to the eukaryotic ribosomal protein P1/P2 family.</text>
</comment>
<reference key="1">
    <citation type="journal article" date="1997" name="J. Bacteriol.">
        <title>Complete genome sequence of Methanobacterium thermoautotrophicum deltaH: functional analysis and comparative genomics.</title>
        <authorList>
            <person name="Smith D.R."/>
            <person name="Doucette-Stamm L.A."/>
            <person name="Deloughery C."/>
            <person name="Lee H.-M."/>
            <person name="Dubois J."/>
            <person name="Aldredge T."/>
            <person name="Bashirzadeh R."/>
            <person name="Blakely D."/>
            <person name="Cook R."/>
            <person name="Gilbert K."/>
            <person name="Harrison D."/>
            <person name="Hoang L."/>
            <person name="Keagle P."/>
            <person name="Lumm W."/>
            <person name="Pothier B."/>
            <person name="Qiu D."/>
            <person name="Spadafora R."/>
            <person name="Vicare R."/>
            <person name="Wang Y."/>
            <person name="Wierzbowski J."/>
            <person name="Gibson R."/>
            <person name="Jiwani N."/>
            <person name="Caruso A."/>
            <person name="Bush D."/>
            <person name="Safer H."/>
            <person name="Patwell D."/>
            <person name="Prabhakar S."/>
            <person name="McDougall S."/>
            <person name="Shimer G."/>
            <person name="Goyal A."/>
            <person name="Pietrovski S."/>
            <person name="Church G.M."/>
            <person name="Daniels C.J."/>
            <person name="Mao J.-I."/>
            <person name="Rice P."/>
            <person name="Noelling J."/>
            <person name="Reeve J.N."/>
        </authorList>
    </citation>
    <scope>NUCLEOTIDE SEQUENCE [LARGE SCALE GENOMIC DNA]</scope>
    <source>
        <strain>ATCC 29096 / DSM 1053 / JCM 10044 / NBRC 100330 / Delta H</strain>
    </source>
</reference>
<reference key="2">
    <citation type="journal article" date="1980" name="Biochim. Biophys. Acta">
        <title>Sequence homologies in the N-terminal region of the ribosomal 'A' proteins from Methanobacterium thermoautotrophicum and Halobacterium cutirubrum.</title>
        <authorList>
            <person name="Matheson A.T."/>
            <person name="Yaguchi M."/>
            <person name="Balch W.E."/>
            <person name="Wolfe R.S."/>
        </authorList>
    </citation>
    <scope>PROTEIN SEQUENCE OF 1-48</scope>
</reference>
<gene>
    <name evidence="1" type="primary">rpl12</name>
    <name type="ordered locus">MTH_1682</name>
</gene>
<proteinExistence type="evidence at protein level"/>
<feature type="chain" id="PRO_0000157631" description="Large ribosomal subunit protein P1">
    <location>
        <begin position="1"/>
        <end position="101"/>
    </location>
</feature>
<feature type="region of interest" description="Disordered" evidence="2">
    <location>
        <begin position="61"/>
        <end position="101"/>
    </location>
</feature>
<feature type="compositionally biased region" description="Low complexity" evidence="2">
    <location>
        <begin position="61"/>
        <end position="72"/>
    </location>
</feature>
<feature type="compositionally biased region" description="Acidic residues" evidence="2">
    <location>
        <begin position="73"/>
        <end position="92"/>
    </location>
</feature>
<protein>
    <recommendedName>
        <fullName evidence="1">Large ribosomal subunit protein P1</fullName>
    </recommendedName>
    <alternativeName>
        <fullName evidence="1">50S ribosomal protein L12</fullName>
    </alternativeName>
    <alternativeName>
        <fullName>Ribosomal protein 'A'</fullName>
    </alternativeName>
</protein>
<name>RL12_METTH</name>
<accession>P05394</accession>
<evidence type="ECO:0000255" key="1">
    <source>
        <dbReference type="HAMAP-Rule" id="MF_01478"/>
    </source>
</evidence>
<evidence type="ECO:0000256" key="2">
    <source>
        <dbReference type="SAM" id="MobiDB-lite"/>
    </source>
</evidence>
<sequence>MEYIYAAMLLHTTGKEINEENVKSVLEAAGAEVDDARVKALIAALEDVDIEEAMETTAVAAAPAAAAAPAAAEEAEEEAEEEEEEEEAEEEAAAGLGALFG</sequence>
<dbReference type="EMBL" id="AE000666">
    <property type="protein sequence ID" value="AAB86154.1"/>
    <property type="molecule type" value="Genomic_DNA"/>
</dbReference>
<dbReference type="PIR" id="H69091">
    <property type="entry name" value="H69091"/>
</dbReference>
<dbReference type="RefSeq" id="WP_010877289.1">
    <property type="nucleotide sequence ID" value="NC_000916.1"/>
</dbReference>
<dbReference type="SMR" id="P05394"/>
<dbReference type="FunCoup" id="P05394">
    <property type="interactions" value="64"/>
</dbReference>
<dbReference type="STRING" id="187420.MTH_1682"/>
<dbReference type="PaxDb" id="187420-MTH_1682"/>
<dbReference type="EnsemblBacteria" id="AAB86154">
    <property type="protein sequence ID" value="AAB86154"/>
    <property type="gene ID" value="MTH_1682"/>
</dbReference>
<dbReference type="GeneID" id="1470767"/>
<dbReference type="KEGG" id="mth:MTH_1682"/>
<dbReference type="PATRIC" id="fig|187420.15.peg.1642"/>
<dbReference type="HOGENOM" id="CLU_114656_2_0_2"/>
<dbReference type="InParanoid" id="P05394"/>
<dbReference type="Proteomes" id="UP000005223">
    <property type="component" value="Chromosome"/>
</dbReference>
<dbReference type="GO" id="GO:1990904">
    <property type="term" value="C:ribonucleoprotein complex"/>
    <property type="evidence" value="ECO:0007669"/>
    <property type="project" value="UniProtKB-KW"/>
</dbReference>
<dbReference type="GO" id="GO:0005840">
    <property type="term" value="C:ribosome"/>
    <property type="evidence" value="ECO:0007669"/>
    <property type="project" value="UniProtKB-KW"/>
</dbReference>
<dbReference type="GO" id="GO:0003735">
    <property type="term" value="F:structural constituent of ribosome"/>
    <property type="evidence" value="ECO:0007669"/>
    <property type="project" value="InterPro"/>
</dbReference>
<dbReference type="GO" id="GO:0006414">
    <property type="term" value="P:translational elongation"/>
    <property type="evidence" value="ECO:0007669"/>
    <property type="project" value="InterPro"/>
</dbReference>
<dbReference type="CDD" id="cd05832">
    <property type="entry name" value="Ribosomal_L12p"/>
    <property type="match status" value="1"/>
</dbReference>
<dbReference type="FunFam" id="1.10.10.1410:FF:000002">
    <property type="entry name" value="60S acidic ribosomal protein P2"/>
    <property type="match status" value="1"/>
</dbReference>
<dbReference type="Gene3D" id="1.10.10.1410">
    <property type="match status" value="1"/>
</dbReference>
<dbReference type="HAMAP" id="MF_01478">
    <property type="entry name" value="Ribosomal_L12_arch"/>
    <property type="match status" value="1"/>
</dbReference>
<dbReference type="InterPro" id="IPR038716">
    <property type="entry name" value="P1/P2_N_sf"/>
</dbReference>
<dbReference type="InterPro" id="IPR027534">
    <property type="entry name" value="Ribosomal_P1/P2"/>
</dbReference>
<dbReference type="InterPro" id="IPR022295">
    <property type="entry name" value="Ribosomal_P1_arc"/>
</dbReference>
<dbReference type="NCBIfam" id="TIGR03685">
    <property type="entry name" value="ribo_P1_arch"/>
    <property type="match status" value="1"/>
</dbReference>
<dbReference type="Pfam" id="PF00428">
    <property type="entry name" value="Ribosomal_60s"/>
    <property type="match status" value="1"/>
</dbReference>